<organism>
    <name type="scientific">Salmonella paratyphi B (strain ATCC BAA-1250 / SPB7)</name>
    <dbReference type="NCBI Taxonomy" id="1016998"/>
    <lineage>
        <taxon>Bacteria</taxon>
        <taxon>Pseudomonadati</taxon>
        <taxon>Pseudomonadota</taxon>
        <taxon>Gammaproteobacteria</taxon>
        <taxon>Enterobacterales</taxon>
        <taxon>Enterobacteriaceae</taxon>
        <taxon>Salmonella</taxon>
    </lineage>
</organism>
<sequence length="901" mass="101808">MLIKLLTKVFGSRNDRTLRRMRKAVSLINAMEPEMEKLSDDELKAKTNEFRARIEKGESVESLIPEAFAVVREASKRVFGMRHFDVQLLGGMVLNDRCIAEMRTGEGKTLTATLPAYLNALSGKGVHVVTVNDYLAQRDAENNRPLFEFLGMSVGINLPGMPAPAKREAYAADITYGTNNEYGFDYLRDNMAFSPEERVQRKLHYALVDEVDSILIDEARTPLIISGPAEDSSEMYKKVNKIIPHLIRQEKEDSDTFQGEGHFSVDEKARQVNLTERGLVLIEELLVQEGIMDEGESLYSPGNIMLMHHVTAALRAHALFTRDVDYIVKDGEVIIVDEHTGRTMQGRRWSDGLHQAVEAKEGVEIQNENQTLASITFQNYFRLYEKLAGMTGTADTEAFEFSSIYKLDTVVVPTNRPMIRKDLPDLVYMTEAEKIQAIIEDIKERTANGQPVLVGTISIEKSEVVSRELTKAGIKHNVLNAKFHANEAGIVAQAGYPAAVTIATNMAGRGTDIMLGGSWQAEVAALEAPTEEQIAQIKADWQVRHDAVLAAGGLHIIGTERHESRRIDNQLRGRSGRQGDPGSSRFYLSMEDALMRIFASDRVSGMMRKLGMKPGEAIEHPWVTKAIANAQRKVESRNFDIRKQLLEYDDVANDQRRAIYTQRNELLDVSDVSDTINSIREDVFKATIDAYIPPQSLEEMWDIPGLQERLKNDFDLELPIAEWLDKEPELHEETLRERILAQSIEVYQRKEEVVGAEMMRHFEKGVMLQTLDSLWKEHLAAMDYLRQGIHLRGYAQKDPKQEYKRESFAMFAAMLESLKYEVISTLSKVQVRMPEEVEAMEMQRREEAERLAQMQQLSHQDDDAAVAADLAAQTGERKIGRNDPCPCGSGKKYKQCHGRLS</sequence>
<gene>
    <name evidence="1" type="primary">secA</name>
    <name type="ordered locus">SPAB_00170</name>
</gene>
<comment type="function">
    <text evidence="1">Part of the Sec protein translocase complex. Interacts with the SecYEG preprotein conducting channel. Has a central role in coupling the hydrolysis of ATP to the transfer of proteins into and across the cell membrane, serving both as a receptor for the preprotein-SecB complex and as an ATP-driven molecular motor driving the stepwise translocation of polypeptide chains across the membrane.</text>
</comment>
<comment type="catalytic activity">
    <reaction evidence="1">
        <text>ATP + H2O + cellular proteinSide 1 = ADP + phosphate + cellular proteinSide 2.</text>
        <dbReference type="EC" id="7.4.2.8"/>
    </reaction>
</comment>
<comment type="cofactor">
    <cofactor evidence="1">
        <name>Zn(2+)</name>
        <dbReference type="ChEBI" id="CHEBI:29105"/>
    </cofactor>
    <text evidence="1">May bind 1 zinc ion per subunit.</text>
</comment>
<comment type="subunit">
    <text evidence="1">Monomer and homodimer. Part of the essential Sec protein translocation apparatus which comprises SecA, SecYEG and auxiliary proteins SecDF-YajC and YidC.</text>
</comment>
<comment type="subcellular location">
    <subcellularLocation>
        <location evidence="1">Cell inner membrane</location>
        <topology evidence="1">Peripheral membrane protein</topology>
        <orientation evidence="1">Cytoplasmic side</orientation>
    </subcellularLocation>
    <subcellularLocation>
        <location evidence="1">Cytoplasm</location>
    </subcellularLocation>
    <text evidence="1">Distribution is 50-50.</text>
</comment>
<comment type="induction">
    <text evidence="1">Repressed under conditions of excess protein secretion capacity and derepressed when protein secretion becomes limiting. This is regulated by SecM.</text>
</comment>
<comment type="similarity">
    <text evidence="1">Belongs to the SecA family.</text>
</comment>
<accession>A9MZM7</accession>
<evidence type="ECO:0000255" key="1">
    <source>
        <dbReference type="HAMAP-Rule" id="MF_01382"/>
    </source>
</evidence>
<name>SECA_SALPB</name>
<feature type="chain" id="PRO_1000087330" description="Protein translocase subunit SecA">
    <location>
        <begin position="1"/>
        <end position="901"/>
    </location>
</feature>
<feature type="binding site" evidence="1">
    <location>
        <position position="87"/>
    </location>
    <ligand>
        <name>ATP</name>
        <dbReference type="ChEBI" id="CHEBI:30616"/>
    </ligand>
</feature>
<feature type="binding site" evidence="1">
    <location>
        <begin position="105"/>
        <end position="109"/>
    </location>
    <ligand>
        <name>ATP</name>
        <dbReference type="ChEBI" id="CHEBI:30616"/>
    </ligand>
</feature>
<feature type="binding site" evidence="1">
    <location>
        <position position="512"/>
    </location>
    <ligand>
        <name>ATP</name>
        <dbReference type="ChEBI" id="CHEBI:30616"/>
    </ligand>
</feature>
<feature type="binding site" evidence="1">
    <location>
        <position position="885"/>
    </location>
    <ligand>
        <name>Zn(2+)</name>
        <dbReference type="ChEBI" id="CHEBI:29105"/>
    </ligand>
</feature>
<feature type="binding site" evidence="1">
    <location>
        <position position="887"/>
    </location>
    <ligand>
        <name>Zn(2+)</name>
        <dbReference type="ChEBI" id="CHEBI:29105"/>
    </ligand>
</feature>
<feature type="binding site" evidence="1">
    <location>
        <position position="896"/>
    </location>
    <ligand>
        <name>Zn(2+)</name>
        <dbReference type="ChEBI" id="CHEBI:29105"/>
    </ligand>
</feature>
<feature type="binding site" evidence="1">
    <location>
        <position position="897"/>
    </location>
    <ligand>
        <name>Zn(2+)</name>
        <dbReference type="ChEBI" id="CHEBI:29105"/>
    </ligand>
</feature>
<keyword id="KW-0067">ATP-binding</keyword>
<keyword id="KW-0997">Cell inner membrane</keyword>
<keyword id="KW-1003">Cell membrane</keyword>
<keyword id="KW-0963">Cytoplasm</keyword>
<keyword id="KW-0472">Membrane</keyword>
<keyword id="KW-0479">Metal-binding</keyword>
<keyword id="KW-0547">Nucleotide-binding</keyword>
<keyword id="KW-0653">Protein transport</keyword>
<keyword id="KW-1278">Translocase</keyword>
<keyword id="KW-0811">Translocation</keyword>
<keyword id="KW-0813">Transport</keyword>
<keyword id="KW-0862">Zinc</keyword>
<proteinExistence type="inferred from homology"/>
<protein>
    <recommendedName>
        <fullName evidence="1">Protein translocase subunit SecA</fullName>
        <ecNumber evidence="1">7.4.2.8</ecNumber>
    </recommendedName>
</protein>
<dbReference type="EC" id="7.4.2.8" evidence="1"/>
<dbReference type="EMBL" id="CP000886">
    <property type="protein sequence ID" value="ABX65612.1"/>
    <property type="molecule type" value="Genomic_DNA"/>
</dbReference>
<dbReference type="RefSeq" id="WP_000905754.1">
    <property type="nucleotide sequence ID" value="NC_010102.1"/>
</dbReference>
<dbReference type="SMR" id="A9MZM7"/>
<dbReference type="KEGG" id="spq:SPAB_00170"/>
<dbReference type="PATRIC" id="fig|1016998.12.peg.162"/>
<dbReference type="HOGENOM" id="CLU_005314_3_0_6"/>
<dbReference type="BioCyc" id="SENT1016998:SPAB_RS00680-MONOMER"/>
<dbReference type="Proteomes" id="UP000008556">
    <property type="component" value="Chromosome"/>
</dbReference>
<dbReference type="GO" id="GO:0031522">
    <property type="term" value="C:cell envelope Sec protein transport complex"/>
    <property type="evidence" value="ECO:0007669"/>
    <property type="project" value="TreeGrafter"/>
</dbReference>
<dbReference type="GO" id="GO:0005829">
    <property type="term" value="C:cytosol"/>
    <property type="evidence" value="ECO:0007669"/>
    <property type="project" value="TreeGrafter"/>
</dbReference>
<dbReference type="GO" id="GO:0005886">
    <property type="term" value="C:plasma membrane"/>
    <property type="evidence" value="ECO:0007669"/>
    <property type="project" value="UniProtKB-SubCell"/>
</dbReference>
<dbReference type="GO" id="GO:0005524">
    <property type="term" value="F:ATP binding"/>
    <property type="evidence" value="ECO:0007669"/>
    <property type="project" value="UniProtKB-UniRule"/>
</dbReference>
<dbReference type="GO" id="GO:0046872">
    <property type="term" value="F:metal ion binding"/>
    <property type="evidence" value="ECO:0007669"/>
    <property type="project" value="UniProtKB-KW"/>
</dbReference>
<dbReference type="GO" id="GO:0008564">
    <property type="term" value="F:protein-exporting ATPase activity"/>
    <property type="evidence" value="ECO:0007669"/>
    <property type="project" value="UniProtKB-EC"/>
</dbReference>
<dbReference type="GO" id="GO:0065002">
    <property type="term" value="P:intracellular protein transmembrane transport"/>
    <property type="evidence" value="ECO:0007669"/>
    <property type="project" value="UniProtKB-UniRule"/>
</dbReference>
<dbReference type="GO" id="GO:0017038">
    <property type="term" value="P:protein import"/>
    <property type="evidence" value="ECO:0007669"/>
    <property type="project" value="InterPro"/>
</dbReference>
<dbReference type="GO" id="GO:0006605">
    <property type="term" value="P:protein targeting"/>
    <property type="evidence" value="ECO:0007669"/>
    <property type="project" value="UniProtKB-UniRule"/>
</dbReference>
<dbReference type="GO" id="GO:0043952">
    <property type="term" value="P:protein transport by the Sec complex"/>
    <property type="evidence" value="ECO:0007669"/>
    <property type="project" value="TreeGrafter"/>
</dbReference>
<dbReference type="CDD" id="cd17928">
    <property type="entry name" value="DEXDc_SecA"/>
    <property type="match status" value="1"/>
</dbReference>
<dbReference type="CDD" id="cd18803">
    <property type="entry name" value="SF2_C_secA"/>
    <property type="match status" value="1"/>
</dbReference>
<dbReference type="FunFam" id="1.10.3060.10:FF:000001">
    <property type="entry name" value="Preprotein translocase subunit SecA"/>
    <property type="match status" value="1"/>
</dbReference>
<dbReference type="FunFam" id="3.40.50.300:FF:000081">
    <property type="entry name" value="Preprotein translocase subunit SecA"/>
    <property type="match status" value="1"/>
</dbReference>
<dbReference type="FunFam" id="3.40.50.300:FF:000113">
    <property type="entry name" value="Preprotein translocase subunit SecA"/>
    <property type="match status" value="1"/>
</dbReference>
<dbReference type="FunFam" id="3.90.1440.10:FF:000001">
    <property type="entry name" value="Preprotein translocase subunit SecA"/>
    <property type="match status" value="1"/>
</dbReference>
<dbReference type="Gene3D" id="1.10.3060.10">
    <property type="entry name" value="Helical scaffold and wing domains of SecA"/>
    <property type="match status" value="1"/>
</dbReference>
<dbReference type="Gene3D" id="3.40.50.300">
    <property type="entry name" value="P-loop containing nucleotide triphosphate hydrolases"/>
    <property type="match status" value="2"/>
</dbReference>
<dbReference type="Gene3D" id="3.90.1440.10">
    <property type="entry name" value="SecA, preprotein cross-linking domain"/>
    <property type="match status" value="1"/>
</dbReference>
<dbReference type="HAMAP" id="MF_01382">
    <property type="entry name" value="SecA"/>
    <property type="match status" value="1"/>
</dbReference>
<dbReference type="InterPro" id="IPR014001">
    <property type="entry name" value="Helicase_ATP-bd"/>
</dbReference>
<dbReference type="InterPro" id="IPR027417">
    <property type="entry name" value="P-loop_NTPase"/>
</dbReference>
<dbReference type="InterPro" id="IPR004027">
    <property type="entry name" value="SEC_C_motif"/>
</dbReference>
<dbReference type="InterPro" id="IPR000185">
    <property type="entry name" value="SecA"/>
</dbReference>
<dbReference type="InterPro" id="IPR020937">
    <property type="entry name" value="SecA_CS"/>
</dbReference>
<dbReference type="InterPro" id="IPR011115">
    <property type="entry name" value="SecA_DEAD"/>
</dbReference>
<dbReference type="InterPro" id="IPR014018">
    <property type="entry name" value="SecA_motor_DEAD"/>
</dbReference>
<dbReference type="InterPro" id="IPR011130">
    <property type="entry name" value="SecA_preprotein_X-link_dom"/>
</dbReference>
<dbReference type="InterPro" id="IPR044722">
    <property type="entry name" value="SecA_SF2_C"/>
</dbReference>
<dbReference type="InterPro" id="IPR011116">
    <property type="entry name" value="SecA_Wing/Scaffold"/>
</dbReference>
<dbReference type="InterPro" id="IPR036266">
    <property type="entry name" value="SecA_Wing/Scaffold_sf"/>
</dbReference>
<dbReference type="InterPro" id="IPR036670">
    <property type="entry name" value="SecA_X-link_sf"/>
</dbReference>
<dbReference type="NCBIfam" id="NF009538">
    <property type="entry name" value="PRK12904.1"/>
    <property type="match status" value="1"/>
</dbReference>
<dbReference type="NCBIfam" id="TIGR00963">
    <property type="entry name" value="secA"/>
    <property type="match status" value="1"/>
</dbReference>
<dbReference type="PANTHER" id="PTHR30612:SF0">
    <property type="entry name" value="CHLOROPLAST PROTEIN-TRANSPORTING ATPASE"/>
    <property type="match status" value="1"/>
</dbReference>
<dbReference type="PANTHER" id="PTHR30612">
    <property type="entry name" value="SECA INNER MEMBRANE COMPONENT OF SEC PROTEIN SECRETION SYSTEM"/>
    <property type="match status" value="1"/>
</dbReference>
<dbReference type="Pfam" id="PF21090">
    <property type="entry name" value="P-loop_SecA"/>
    <property type="match status" value="1"/>
</dbReference>
<dbReference type="Pfam" id="PF02810">
    <property type="entry name" value="SEC-C"/>
    <property type="match status" value="1"/>
</dbReference>
<dbReference type="Pfam" id="PF07517">
    <property type="entry name" value="SecA_DEAD"/>
    <property type="match status" value="1"/>
</dbReference>
<dbReference type="Pfam" id="PF01043">
    <property type="entry name" value="SecA_PP_bind"/>
    <property type="match status" value="1"/>
</dbReference>
<dbReference type="Pfam" id="PF07516">
    <property type="entry name" value="SecA_SW"/>
    <property type="match status" value="1"/>
</dbReference>
<dbReference type="PRINTS" id="PR00906">
    <property type="entry name" value="SECA"/>
</dbReference>
<dbReference type="SMART" id="SM00957">
    <property type="entry name" value="SecA_DEAD"/>
    <property type="match status" value="1"/>
</dbReference>
<dbReference type="SMART" id="SM00958">
    <property type="entry name" value="SecA_PP_bind"/>
    <property type="match status" value="1"/>
</dbReference>
<dbReference type="SUPFAM" id="SSF81886">
    <property type="entry name" value="Helical scaffold and wing domains of SecA"/>
    <property type="match status" value="1"/>
</dbReference>
<dbReference type="SUPFAM" id="SSF52540">
    <property type="entry name" value="P-loop containing nucleoside triphosphate hydrolases"/>
    <property type="match status" value="2"/>
</dbReference>
<dbReference type="SUPFAM" id="SSF81767">
    <property type="entry name" value="Pre-protein crosslinking domain of SecA"/>
    <property type="match status" value="1"/>
</dbReference>
<dbReference type="PROSITE" id="PS01312">
    <property type="entry name" value="SECA"/>
    <property type="match status" value="1"/>
</dbReference>
<dbReference type="PROSITE" id="PS51196">
    <property type="entry name" value="SECA_MOTOR_DEAD"/>
    <property type="match status" value="1"/>
</dbReference>
<reference key="1">
    <citation type="submission" date="2007-11" db="EMBL/GenBank/DDBJ databases">
        <authorList>
            <consortium name="The Salmonella enterica serovar Paratyphi B Genome Sequencing Project"/>
            <person name="McClelland M."/>
            <person name="Sanderson E.K."/>
            <person name="Porwollik S."/>
            <person name="Spieth J."/>
            <person name="Clifton W.S."/>
            <person name="Fulton R."/>
            <person name="Cordes M."/>
            <person name="Wollam A."/>
            <person name="Shah N."/>
            <person name="Pepin K."/>
            <person name="Bhonagiri V."/>
            <person name="Nash W."/>
            <person name="Johnson M."/>
            <person name="Thiruvilangam P."/>
            <person name="Wilson R."/>
        </authorList>
    </citation>
    <scope>NUCLEOTIDE SEQUENCE [LARGE SCALE GENOMIC DNA]</scope>
    <source>
        <strain>ATCC BAA-1250 / SPB7</strain>
    </source>
</reference>